<feature type="chain" id="PRO_0000386118" description="GTPase Obg">
    <location>
        <begin position="1"/>
        <end position="340"/>
    </location>
</feature>
<feature type="domain" description="Obg" evidence="2">
    <location>
        <begin position="1"/>
        <end position="159"/>
    </location>
</feature>
<feature type="domain" description="OBG-type G" evidence="1">
    <location>
        <begin position="160"/>
        <end position="331"/>
    </location>
</feature>
<feature type="binding site" evidence="1">
    <location>
        <begin position="166"/>
        <end position="173"/>
    </location>
    <ligand>
        <name>GTP</name>
        <dbReference type="ChEBI" id="CHEBI:37565"/>
    </ligand>
</feature>
<feature type="binding site" evidence="1">
    <location>
        <position position="173"/>
    </location>
    <ligand>
        <name>Mg(2+)</name>
        <dbReference type="ChEBI" id="CHEBI:18420"/>
    </ligand>
</feature>
<feature type="binding site" evidence="1">
    <location>
        <begin position="191"/>
        <end position="195"/>
    </location>
    <ligand>
        <name>GTP</name>
        <dbReference type="ChEBI" id="CHEBI:37565"/>
    </ligand>
</feature>
<feature type="binding site" evidence="1">
    <location>
        <position position="193"/>
    </location>
    <ligand>
        <name>Mg(2+)</name>
        <dbReference type="ChEBI" id="CHEBI:18420"/>
    </ligand>
</feature>
<feature type="binding site" evidence="1">
    <location>
        <begin position="213"/>
        <end position="216"/>
    </location>
    <ligand>
        <name>GTP</name>
        <dbReference type="ChEBI" id="CHEBI:37565"/>
    </ligand>
</feature>
<feature type="binding site" evidence="1">
    <location>
        <begin position="283"/>
        <end position="286"/>
    </location>
    <ligand>
        <name>GTP</name>
        <dbReference type="ChEBI" id="CHEBI:37565"/>
    </ligand>
</feature>
<feature type="binding site" evidence="1">
    <location>
        <begin position="312"/>
        <end position="314"/>
    </location>
    <ligand>
        <name>GTP</name>
        <dbReference type="ChEBI" id="CHEBI:37565"/>
    </ligand>
</feature>
<comment type="function">
    <text evidence="1">An essential GTPase which binds GTP, GDP and possibly (p)ppGpp with moderate affinity, with high nucleotide exchange rates and a fairly low GTP hydrolysis rate. Plays a role in control of the cell cycle, stress response, ribosome biogenesis and in those bacteria that undergo differentiation, in morphogenesis control.</text>
</comment>
<comment type="cofactor">
    <cofactor evidence="1">
        <name>Mg(2+)</name>
        <dbReference type="ChEBI" id="CHEBI:18420"/>
    </cofactor>
</comment>
<comment type="subunit">
    <text evidence="1">Monomer.</text>
</comment>
<comment type="subcellular location">
    <subcellularLocation>
        <location evidence="1">Cytoplasm</location>
    </subcellularLocation>
</comment>
<comment type="similarity">
    <text evidence="1">Belongs to the TRAFAC class OBG-HflX-like GTPase superfamily. OBG GTPase family.</text>
</comment>
<organism>
    <name type="scientific">Persephonella marina (strain DSM 14350 / EX-H1)</name>
    <dbReference type="NCBI Taxonomy" id="123214"/>
    <lineage>
        <taxon>Bacteria</taxon>
        <taxon>Pseudomonadati</taxon>
        <taxon>Aquificota</taxon>
        <taxon>Aquificia</taxon>
        <taxon>Aquificales</taxon>
        <taxon>Hydrogenothermaceae</taxon>
        <taxon>Persephonella</taxon>
    </lineage>
</organism>
<reference key="1">
    <citation type="journal article" date="2009" name="J. Bacteriol.">
        <title>Complete and draft genome sequences of six members of the Aquificales.</title>
        <authorList>
            <person name="Reysenbach A.-L."/>
            <person name="Hamamura N."/>
            <person name="Podar M."/>
            <person name="Griffiths E."/>
            <person name="Ferreira S."/>
            <person name="Hochstein R."/>
            <person name="Heidelberg J."/>
            <person name="Johnson J."/>
            <person name="Mead D."/>
            <person name="Pohorille A."/>
            <person name="Sarmiento M."/>
            <person name="Schweighofer K."/>
            <person name="Seshadri R."/>
            <person name="Voytek M.A."/>
        </authorList>
    </citation>
    <scope>NUCLEOTIDE SEQUENCE [LARGE SCALE GENOMIC DNA]</scope>
    <source>
        <strain>DSM 14350 / EX-H1</strain>
    </source>
</reference>
<proteinExistence type="inferred from homology"/>
<name>OBG_PERMH</name>
<sequence>MRFIDKAKIHVKAGDGGNGCVAFRREKYVRMGGPSGGNGGKGGDVIIMADKSLKTLMDFRYKKHFKAENGQHGSGNNRHGRNGKDLIIKVPVGTVVKDAETGEILADLIYDGQKVVVAKGGRGGRGNAAFKTSTNQAPDYAEEGQPGEERWIELELKLIADIGIIGFPNAGKSTLISVLSKAKPKIADYPFTTLTPVLGVLQLDYGKSVVIADIPGLIEGASKGAGLGHEFLRHIERTKALIHMIDISDQRERDPIEAFEIINKELEKYSPELVKKPQIVVGNKIDMLSDRSLIEKLKKEFSKRGYPFVAVSLVTKEGLDQLIKLIAEVYEKISEKELIK</sequence>
<gene>
    <name evidence="1" type="primary">obg</name>
    <name type="ordered locus">PERMA_0490</name>
</gene>
<dbReference type="EC" id="3.6.5.-" evidence="1"/>
<dbReference type="EMBL" id="CP001230">
    <property type="protein sequence ID" value="ACO04185.1"/>
    <property type="molecule type" value="Genomic_DNA"/>
</dbReference>
<dbReference type="RefSeq" id="WP_012676423.1">
    <property type="nucleotide sequence ID" value="NC_012440.1"/>
</dbReference>
<dbReference type="SMR" id="C0QUB5"/>
<dbReference type="STRING" id="123214.PERMA_0490"/>
<dbReference type="PaxDb" id="123214-PERMA_0490"/>
<dbReference type="KEGG" id="pmx:PERMA_0490"/>
<dbReference type="eggNOG" id="COG0536">
    <property type="taxonomic scope" value="Bacteria"/>
</dbReference>
<dbReference type="HOGENOM" id="CLU_011747_2_3_0"/>
<dbReference type="OrthoDB" id="9807318at2"/>
<dbReference type="Proteomes" id="UP000001366">
    <property type="component" value="Chromosome"/>
</dbReference>
<dbReference type="GO" id="GO:0005737">
    <property type="term" value="C:cytoplasm"/>
    <property type="evidence" value="ECO:0007669"/>
    <property type="project" value="UniProtKB-SubCell"/>
</dbReference>
<dbReference type="GO" id="GO:0005525">
    <property type="term" value="F:GTP binding"/>
    <property type="evidence" value="ECO:0007669"/>
    <property type="project" value="UniProtKB-UniRule"/>
</dbReference>
<dbReference type="GO" id="GO:0003924">
    <property type="term" value="F:GTPase activity"/>
    <property type="evidence" value="ECO:0007669"/>
    <property type="project" value="UniProtKB-UniRule"/>
</dbReference>
<dbReference type="GO" id="GO:0000287">
    <property type="term" value="F:magnesium ion binding"/>
    <property type="evidence" value="ECO:0007669"/>
    <property type="project" value="InterPro"/>
</dbReference>
<dbReference type="GO" id="GO:0042254">
    <property type="term" value="P:ribosome biogenesis"/>
    <property type="evidence" value="ECO:0007669"/>
    <property type="project" value="UniProtKB-UniRule"/>
</dbReference>
<dbReference type="CDD" id="cd01898">
    <property type="entry name" value="Obg"/>
    <property type="match status" value="1"/>
</dbReference>
<dbReference type="FunFam" id="2.70.210.12:FF:000001">
    <property type="entry name" value="GTPase Obg"/>
    <property type="match status" value="1"/>
</dbReference>
<dbReference type="Gene3D" id="2.70.210.12">
    <property type="entry name" value="GTP1/OBG domain"/>
    <property type="match status" value="1"/>
</dbReference>
<dbReference type="Gene3D" id="3.40.50.300">
    <property type="entry name" value="P-loop containing nucleotide triphosphate hydrolases"/>
    <property type="match status" value="1"/>
</dbReference>
<dbReference type="HAMAP" id="MF_01454">
    <property type="entry name" value="GTPase_Obg"/>
    <property type="match status" value="1"/>
</dbReference>
<dbReference type="InterPro" id="IPR031167">
    <property type="entry name" value="G_OBG"/>
</dbReference>
<dbReference type="InterPro" id="IPR006073">
    <property type="entry name" value="GTP-bd"/>
</dbReference>
<dbReference type="InterPro" id="IPR014100">
    <property type="entry name" value="GTP-bd_Obg/CgtA"/>
</dbReference>
<dbReference type="InterPro" id="IPR006074">
    <property type="entry name" value="GTP1-OBG_CS"/>
</dbReference>
<dbReference type="InterPro" id="IPR006169">
    <property type="entry name" value="GTP1_OBG_dom"/>
</dbReference>
<dbReference type="InterPro" id="IPR036726">
    <property type="entry name" value="GTP1_OBG_dom_sf"/>
</dbReference>
<dbReference type="InterPro" id="IPR045086">
    <property type="entry name" value="OBG_GTPase"/>
</dbReference>
<dbReference type="InterPro" id="IPR027417">
    <property type="entry name" value="P-loop_NTPase"/>
</dbReference>
<dbReference type="InterPro" id="IPR005225">
    <property type="entry name" value="Small_GTP-bd"/>
</dbReference>
<dbReference type="NCBIfam" id="TIGR02729">
    <property type="entry name" value="Obg_CgtA"/>
    <property type="match status" value="1"/>
</dbReference>
<dbReference type="NCBIfam" id="NF008954">
    <property type="entry name" value="PRK12296.1"/>
    <property type="match status" value="1"/>
</dbReference>
<dbReference type="NCBIfam" id="NF008955">
    <property type="entry name" value="PRK12297.1"/>
    <property type="match status" value="1"/>
</dbReference>
<dbReference type="NCBIfam" id="NF008956">
    <property type="entry name" value="PRK12299.1"/>
    <property type="match status" value="1"/>
</dbReference>
<dbReference type="NCBIfam" id="TIGR00231">
    <property type="entry name" value="small_GTP"/>
    <property type="match status" value="1"/>
</dbReference>
<dbReference type="PANTHER" id="PTHR11702">
    <property type="entry name" value="DEVELOPMENTALLY REGULATED GTP-BINDING PROTEIN-RELATED"/>
    <property type="match status" value="1"/>
</dbReference>
<dbReference type="PANTHER" id="PTHR11702:SF31">
    <property type="entry name" value="MITOCHONDRIAL RIBOSOME-ASSOCIATED GTPASE 2"/>
    <property type="match status" value="1"/>
</dbReference>
<dbReference type="Pfam" id="PF01018">
    <property type="entry name" value="GTP1_OBG"/>
    <property type="match status" value="1"/>
</dbReference>
<dbReference type="Pfam" id="PF01926">
    <property type="entry name" value="MMR_HSR1"/>
    <property type="match status" value="1"/>
</dbReference>
<dbReference type="PIRSF" id="PIRSF002401">
    <property type="entry name" value="GTP_bd_Obg/CgtA"/>
    <property type="match status" value="1"/>
</dbReference>
<dbReference type="PRINTS" id="PR00326">
    <property type="entry name" value="GTP1OBG"/>
</dbReference>
<dbReference type="SUPFAM" id="SSF82051">
    <property type="entry name" value="Obg GTP-binding protein N-terminal domain"/>
    <property type="match status" value="1"/>
</dbReference>
<dbReference type="SUPFAM" id="SSF52540">
    <property type="entry name" value="P-loop containing nucleoside triphosphate hydrolases"/>
    <property type="match status" value="1"/>
</dbReference>
<dbReference type="PROSITE" id="PS51710">
    <property type="entry name" value="G_OBG"/>
    <property type="match status" value="1"/>
</dbReference>
<dbReference type="PROSITE" id="PS00905">
    <property type="entry name" value="GTP1_OBG"/>
    <property type="match status" value="1"/>
</dbReference>
<dbReference type="PROSITE" id="PS51883">
    <property type="entry name" value="OBG"/>
    <property type="match status" value="1"/>
</dbReference>
<accession>C0QUB5</accession>
<keyword id="KW-0963">Cytoplasm</keyword>
<keyword id="KW-0342">GTP-binding</keyword>
<keyword id="KW-0378">Hydrolase</keyword>
<keyword id="KW-0460">Magnesium</keyword>
<keyword id="KW-0479">Metal-binding</keyword>
<keyword id="KW-0547">Nucleotide-binding</keyword>
<keyword id="KW-1185">Reference proteome</keyword>
<evidence type="ECO:0000255" key="1">
    <source>
        <dbReference type="HAMAP-Rule" id="MF_01454"/>
    </source>
</evidence>
<evidence type="ECO:0000255" key="2">
    <source>
        <dbReference type="PROSITE-ProRule" id="PRU01231"/>
    </source>
</evidence>
<protein>
    <recommendedName>
        <fullName evidence="1">GTPase Obg</fullName>
        <ecNumber evidence="1">3.6.5.-</ecNumber>
    </recommendedName>
    <alternativeName>
        <fullName evidence="1">GTP-binding protein Obg</fullName>
    </alternativeName>
</protein>